<organism>
    <name type="scientific">Synechococcus sp. (strain CC9311)</name>
    <dbReference type="NCBI Taxonomy" id="64471"/>
    <lineage>
        <taxon>Bacteria</taxon>
        <taxon>Bacillati</taxon>
        <taxon>Cyanobacteriota</taxon>
        <taxon>Cyanophyceae</taxon>
        <taxon>Synechococcales</taxon>
        <taxon>Synechococcaceae</taxon>
        <taxon>Synechococcus</taxon>
    </lineage>
</organism>
<reference key="1">
    <citation type="journal article" date="2006" name="Proc. Natl. Acad. Sci. U.S.A.">
        <title>Genome sequence of Synechococcus CC9311: insights into adaptation to a coastal environment.</title>
        <authorList>
            <person name="Palenik B."/>
            <person name="Ren Q."/>
            <person name="Dupont C.L."/>
            <person name="Myers G.S."/>
            <person name="Heidelberg J.F."/>
            <person name="Badger J.H."/>
            <person name="Madupu R."/>
            <person name="Nelson W.C."/>
            <person name="Brinkac L.M."/>
            <person name="Dodson R.J."/>
            <person name="Durkin A.S."/>
            <person name="Daugherty S.C."/>
            <person name="Sullivan S.A."/>
            <person name="Khouri H."/>
            <person name="Mohamoud Y."/>
            <person name="Halpin R."/>
            <person name="Paulsen I.T."/>
        </authorList>
    </citation>
    <scope>NUCLEOTIDE SEQUENCE [LARGE SCALE GENOMIC DNA]</scope>
    <source>
        <strain>CC9311</strain>
    </source>
</reference>
<gene>
    <name evidence="1" type="primary">pxcA</name>
    <name type="ordered locus">sync_1328</name>
</gene>
<sequence length="382" mass="42980">MAFRNWIGAFGKANALDVNSDLDRGYEAALLIQSLELEYYGDRPIRPDLELSVPKSVQATVLRKFRVAINVCRASLDQLEYQRSQLDPQELRQLQLIESVVNRYSPKRVSTAPTMTRDPDPLPRSLLGVFDKVRRQLNPAGEATLVAGFRRRRDSTLISLKVLLLLILVPLLVQQVSRTYIISPAVDRFAPDLPFLSYPKPQLEEQAVEKLRVYKAEIEFDALLRGDTIPSQEELQQQLGKKASELKEEADAESTHAVKNVLADISATIAFVVVCLFSREELRVLRGFFDEAVYGLSDSAKAFAIILFTDIFVGFHSPEGWTVLLDGIANHFGFPARENFILLFIATFPVILATIFKYWIFRYLNRVSPSSVATLRGMNGGG</sequence>
<name>PXCA_SYNS3</name>
<dbReference type="EMBL" id="CP000435">
    <property type="protein sequence ID" value="ABI46296.1"/>
    <property type="molecule type" value="Genomic_DNA"/>
</dbReference>
<dbReference type="RefSeq" id="WP_011619255.1">
    <property type="nucleotide sequence ID" value="NC_008319.1"/>
</dbReference>
<dbReference type="SMR" id="Q0IAI7"/>
<dbReference type="STRING" id="64471.sync_1328"/>
<dbReference type="KEGG" id="syg:sync_1328"/>
<dbReference type="eggNOG" id="ENOG502Z8DN">
    <property type="taxonomic scope" value="Bacteria"/>
</dbReference>
<dbReference type="HOGENOM" id="CLU_690401_0_0_3"/>
<dbReference type="OrthoDB" id="418298at2"/>
<dbReference type="Proteomes" id="UP000001961">
    <property type="component" value="Chromosome"/>
</dbReference>
<dbReference type="GO" id="GO:0005886">
    <property type="term" value="C:plasma membrane"/>
    <property type="evidence" value="ECO:0007669"/>
    <property type="project" value="UniProtKB-SubCell"/>
</dbReference>
<dbReference type="GO" id="GO:0015078">
    <property type="term" value="F:proton transmembrane transporter activity"/>
    <property type="evidence" value="ECO:0007669"/>
    <property type="project" value="UniProtKB-UniRule"/>
</dbReference>
<dbReference type="HAMAP" id="MF_01308">
    <property type="entry name" value="CemA_PxcA"/>
    <property type="match status" value="1"/>
</dbReference>
<dbReference type="InterPro" id="IPR004282">
    <property type="entry name" value="CemA"/>
</dbReference>
<dbReference type="NCBIfam" id="NF002705">
    <property type="entry name" value="PRK02507.1-4"/>
    <property type="match status" value="1"/>
</dbReference>
<dbReference type="PANTHER" id="PTHR33650:SF2">
    <property type="entry name" value="CHLOROPLAST ENVELOPE MEMBRANE PROTEIN"/>
    <property type="match status" value="1"/>
</dbReference>
<dbReference type="PANTHER" id="PTHR33650">
    <property type="entry name" value="CHLOROPLAST ENVELOPE MEMBRANE PROTEIN-RELATED"/>
    <property type="match status" value="1"/>
</dbReference>
<dbReference type="Pfam" id="PF03040">
    <property type="entry name" value="CemA"/>
    <property type="match status" value="1"/>
</dbReference>
<keyword id="KW-0997">Cell inner membrane</keyword>
<keyword id="KW-1003">Cell membrane</keyword>
<keyword id="KW-0375">Hydrogen ion transport</keyword>
<keyword id="KW-0406">Ion transport</keyword>
<keyword id="KW-0472">Membrane</keyword>
<keyword id="KW-1185">Reference proteome</keyword>
<keyword id="KW-0812">Transmembrane</keyword>
<keyword id="KW-1133">Transmembrane helix</keyword>
<keyword id="KW-0813">Transport</keyword>
<comment type="function">
    <text evidence="1">Required for H(+) efflux immediately after light irradiation to form a rapid H(+) concentration gradient across the thylakoid membranes. Together with PxcL, contributes to transient H(+) uptake following dark to light transition.</text>
</comment>
<comment type="subcellular location">
    <subcellularLocation>
        <location evidence="1">Cell inner membrane</location>
        <topology evidence="1">Multi-pass membrane protein</topology>
    </subcellularLocation>
</comment>
<comment type="similarity">
    <text evidence="1">Belongs to the CemA family.</text>
</comment>
<feature type="chain" id="PRO_0000293499" description="Proton extrusion protein PxcA">
    <location>
        <begin position="1"/>
        <end position="382"/>
    </location>
</feature>
<feature type="transmembrane region" description="Helical" evidence="1">
    <location>
        <begin position="156"/>
        <end position="176"/>
    </location>
</feature>
<feature type="transmembrane region" description="Helical" evidence="1">
    <location>
        <begin position="257"/>
        <end position="277"/>
    </location>
</feature>
<feature type="transmembrane region" description="Helical" evidence="1">
    <location>
        <begin position="305"/>
        <end position="325"/>
    </location>
</feature>
<feature type="transmembrane region" description="Helical" evidence="1">
    <location>
        <begin position="340"/>
        <end position="360"/>
    </location>
</feature>
<evidence type="ECO:0000255" key="1">
    <source>
        <dbReference type="HAMAP-Rule" id="MF_01308"/>
    </source>
</evidence>
<proteinExistence type="inferred from homology"/>
<accession>Q0IAI7</accession>
<protein>
    <recommendedName>
        <fullName evidence="1">Proton extrusion protein PxcA</fullName>
    </recommendedName>
</protein>